<accession>Q68AZ0</accession>
<dbReference type="EMBL" id="AB163435">
    <property type="protein sequence ID" value="BAD37148.1"/>
    <property type="molecule type" value="mRNA"/>
</dbReference>
<dbReference type="EMBL" id="AB183194">
    <property type="protein sequence ID" value="BAD83842.1"/>
    <property type="molecule type" value="mRNA"/>
</dbReference>
<dbReference type="RefSeq" id="NP_001005250.1">
    <property type="nucleotide sequence ID" value="NM_001005250.1"/>
</dbReference>
<dbReference type="SMR" id="Q68AZ0"/>
<dbReference type="FunCoup" id="Q68AZ0">
    <property type="interactions" value="379"/>
</dbReference>
<dbReference type="STRING" id="9615.ENSCAFP00000045688"/>
<dbReference type="PaxDb" id="9612-ENSCAFP00000026825"/>
<dbReference type="Ensembl" id="ENSCAFT00000028847.5">
    <property type="protein sequence ID" value="ENSCAFP00000026825.3"/>
    <property type="gene ID" value="ENSCAFG00000018164.5"/>
</dbReference>
<dbReference type="Ensembl" id="ENSCAFT00030038498.1">
    <property type="protein sequence ID" value="ENSCAFP00030033587.1"/>
    <property type="gene ID" value="ENSCAFG00030020896.1"/>
</dbReference>
<dbReference type="Ensembl" id="ENSCAFT00040008448.1">
    <property type="protein sequence ID" value="ENSCAFP00040007336.1"/>
    <property type="gene ID" value="ENSCAFG00040004450.1"/>
</dbReference>
<dbReference type="Ensembl" id="ENSCAFT00845015652.1">
    <property type="protein sequence ID" value="ENSCAFP00845012169.1"/>
    <property type="gene ID" value="ENSCAFG00845008857.1"/>
</dbReference>
<dbReference type="GeneID" id="448786"/>
<dbReference type="KEGG" id="cfa:448786"/>
<dbReference type="CTD" id="6351"/>
<dbReference type="VEuPathDB" id="HostDB:ENSCAFG00845008857"/>
<dbReference type="eggNOG" id="ENOG502S8M4">
    <property type="taxonomic scope" value="Eukaryota"/>
</dbReference>
<dbReference type="GeneTree" id="ENSGT00940000165089"/>
<dbReference type="HOGENOM" id="CLU_141716_4_0_1"/>
<dbReference type="InParanoid" id="Q68AZ0"/>
<dbReference type="OMA" id="WVQEYME"/>
<dbReference type="OrthoDB" id="9447832at2759"/>
<dbReference type="TreeFam" id="TF334888"/>
<dbReference type="Reactome" id="R-CFA-418594">
    <property type="pathway name" value="G alpha (i) signalling events"/>
</dbReference>
<dbReference type="Proteomes" id="UP000002254">
    <property type="component" value="Chromosome 9"/>
</dbReference>
<dbReference type="Proteomes" id="UP000694429">
    <property type="component" value="Chromosome 9"/>
</dbReference>
<dbReference type="Proteomes" id="UP000694542">
    <property type="component" value="Chromosome 9"/>
</dbReference>
<dbReference type="Proteomes" id="UP000805418">
    <property type="component" value="Chromosome 9"/>
</dbReference>
<dbReference type="Bgee" id="ENSCAFG00000018164">
    <property type="expression patterns" value="Expressed in cartilage tissue and 45 other cell types or tissues"/>
</dbReference>
<dbReference type="GO" id="GO:0005615">
    <property type="term" value="C:extracellular space"/>
    <property type="evidence" value="ECO:0000318"/>
    <property type="project" value="GO_Central"/>
</dbReference>
<dbReference type="GO" id="GO:0048020">
    <property type="term" value="F:CCR chemokine receptor binding"/>
    <property type="evidence" value="ECO:0000318"/>
    <property type="project" value="GO_Central"/>
</dbReference>
<dbReference type="GO" id="GO:0008009">
    <property type="term" value="F:chemokine activity"/>
    <property type="evidence" value="ECO:0000318"/>
    <property type="project" value="GO_Central"/>
</dbReference>
<dbReference type="GO" id="GO:0061844">
    <property type="term" value="P:antimicrobial humoral immune response mediated by antimicrobial peptide"/>
    <property type="evidence" value="ECO:0000318"/>
    <property type="project" value="GO_Central"/>
</dbReference>
<dbReference type="GO" id="GO:0070098">
    <property type="term" value="P:chemokine-mediated signaling pathway"/>
    <property type="evidence" value="ECO:0000318"/>
    <property type="project" value="GO_Central"/>
</dbReference>
<dbReference type="GO" id="GO:0048245">
    <property type="term" value="P:eosinophil chemotaxis"/>
    <property type="evidence" value="ECO:0000318"/>
    <property type="project" value="GO_Central"/>
</dbReference>
<dbReference type="GO" id="GO:0006954">
    <property type="term" value="P:inflammatory response"/>
    <property type="evidence" value="ECO:0000318"/>
    <property type="project" value="GO_Central"/>
</dbReference>
<dbReference type="GO" id="GO:0030335">
    <property type="term" value="P:positive regulation of cell migration"/>
    <property type="evidence" value="ECO:0000318"/>
    <property type="project" value="GO_Central"/>
</dbReference>
<dbReference type="CDD" id="cd00272">
    <property type="entry name" value="Chemokine_CC"/>
    <property type="match status" value="1"/>
</dbReference>
<dbReference type="FunFam" id="2.40.50.40:FF:000002">
    <property type="entry name" value="C-C motif chemokine"/>
    <property type="match status" value="1"/>
</dbReference>
<dbReference type="Gene3D" id="2.40.50.40">
    <property type="match status" value="1"/>
</dbReference>
<dbReference type="InterPro" id="IPR039809">
    <property type="entry name" value="Chemokine_b/g/d"/>
</dbReference>
<dbReference type="InterPro" id="IPR000827">
    <property type="entry name" value="Chemokine_CC_CS"/>
</dbReference>
<dbReference type="InterPro" id="IPR001811">
    <property type="entry name" value="Chemokine_IL8-like_dom"/>
</dbReference>
<dbReference type="InterPro" id="IPR036048">
    <property type="entry name" value="Interleukin_8-like_sf"/>
</dbReference>
<dbReference type="PANTHER" id="PTHR12015:SF103">
    <property type="entry name" value="C-C MOTIF CHEMOKINE 4-RELATED"/>
    <property type="match status" value="1"/>
</dbReference>
<dbReference type="PANTHER" id="PTHR12015">
    <property type="entry name" value="SMALL INDUCIBLE CYTOKINE A"/>
    <property type="match status" value="1"/>
</dbReference>
<dbReference type="Pfam" id="PF00048">
    <property type="entry name" value="IL8"/>
    <property type="match status" value="1"/>
</dbReference>
<dbReference type="SMART" id="SM00199">
    <property type="entry name" value="SCY"/>
    <property type="match status" value="1"/>
</dbReference>
<dbReference type="SUPFAM" id="SSF54117">
    <property type="entry name" value="Interleukin 8-like chemokines"/>
    <property type="match status" value="1"/>
</dbReference>
<dbReference type="PROSITE" id="PS00472">
    <property type="entry name" value="SMALL_CYTOKINES_CC"/>
    <property type="match status" value="1"/>
</dbReference>
<sequence length="92" mass="10197">MKLCVTVLSLLVLVAAFCSPALSAPMGSDPPTACCFSYTLRKIPRNFVADYFETSSLCSQPAVVFQTRRGRQVCANPSEPWVQEYMDDLELN</sequence>
<reference key="1">
    <citation type="submission" date="2004-07" db="EMBL/GenBank/DDBJ databases">
        <title>Expression analysis of chemokine gene in canine atopic dermatitis.</title>
        <authorList>
            <person name="Tsukui T."/>
            <person name="Sakaguchi M."/>
            <person name="Maeda S."/>
            <person name="Koyanagi M."/>
            <person name="Masuda K."/>
            <person name="Ohno K."/>
            <person name="Tsujimoto H."/>
            <person name="Iwabuchi S."/>
        </authorList>
    </citation>
    <scope>NUCLEOTIDE SEQUENCE [MRNA]</scope>
</reference>
<organism>
    <name type="scientific">Canis lupus familiaris</name>
    <name type="common">Dog</name>
    <name type="synonym">Canis familiaris</name>
    <dbReference type="NCBI Taxonomy" id="9615"/>
    <lineage>
        <taxon>Eukaryota</taxon>
        <taxon>Metazoa</taxon>
        <taxon>Chordata</taxon>
        <taxon>Craniata</taxon>
        <taxon>Vertebrata</taxon>
        <taxon>Euteleostomi</taxon>
        <taxon>Mammalia</taxon>
        <taxon>Eutheria</taxon>
        <taxon>Laurasiatheria</taxon>
        <taxon>Carnivora</taxon>
        <taxon>Caniformia</taxon>
        <taxon>Canidae</taxon>
        <taxon>Canis</taxon>
    </lineage>
</organism>
<feature type="signal peptide" evidence="1">
    <location>
        <begin position="1"/>
        <end position="23"/>
    </location>
</feature>
<feature type="chain" id="PRO_0000326236" description="C-C motif chemokine 4">
    <location>
        <begin position="24"/>
        <end position="92"/>
    </location>
</feature>
<feature type="disulfide bond" evidence="1">
    <location>
        <begin position="34"/>
        <end position="58"/>
    </location>
</feature>
<feature type="disulfide bond" evidence="1">
    <location>
        <begin position="35"/>
        <end position="74"/>
    </location>
</feature>
<evidence type="ECO:0000250" key="1"/>
<evidence type="ECO:0000305" key="2"/>
<name>CCL4_CANLF</name>
<protein>
    <recommendedName>
        <fullName>C-C motif chemokine 4</fullName>
    </recommendedName>
    <alternativeName>
        <fullName>Small-inducible cytokine A4</fullName>
    </alternativeName>
</protein>
<proteinExistence type="inferred from homology"/>
<gene>
    <name type="primary">CCL4</name>
    <name type="synonym">SCYA4</name>
</gene>
<keyword id="KW-0145">Chemotaxis</keyword>
<keyword id="KW-0202">Cytokine</keyword>
<keyword id="KW-1015">Disulfide bond</keyword>
<keyword id="KW-0395">Inflammatory response</keyword>
<keyword id="KW-1185">Reference proteome</keyword>
<keyword id="KW-0964">Secreted</keyword>
<keyword id="KW-0732">Signal</keyword>
<comment type="function">
    <text evidence="1">Monokine with inflammatory and chemokinetic properties.</text>
</comment>
<comment type="subunit">
    <text evidence="1">Homodimer. Interacts with CCR5 (By similarity).</text>
</comment>
<comment type="subcellular location">
    <subcellularLocation>
        <location evidence="1">Secreted</location>
    </subcellularLocation>
</comment>
<comment type="similarity">
    <text evidence="2">Belongs to the intercrine beta (chemokine CC) family.</text>
</comment>